<gene>
    <name type="primary">BHLH56</name>
    <name type="synonym">EN106</name>
    <name type="ordered locus">At4g28800</name>
    <name type="ORF">F16A16.90</name>
</gene>
<sequence length="445" mass="49286">MQFDESDARVWIWFEIRREDDIVELLWQSGQVVGTNQTHRQSYDPPPILRGSGSGRGEENAPLSQPPPHLHQQNLFIQEGEMYSWLHHSYRQNYFCSELLNSTPATHPQSSISLAPRQTIATRRAENFMNFSWLRGNIFTGGRVDEAGPSFSVVRESMQVGSNTTPPSSSATESCVIPATEGTASRVSGTLAAHDLGRKGKAVAVEAAGTPSSGVCKAETEPVQIQPATESKLKAREETHGTEEARGSTSRKRSRTAEMHNLAERRRREKINEKMKTLQQLIPRCNKSTKVSTLDDAIEYVKSLQSQIQGMMSPMMNAGNTQQFMPHMAMDMNRPPPFIPFPGTSFPMPAQMAGVGPSYPAPRYPFPNIQTFDPSRVRLPSPQPNPVSNQPQFPAYMNPYSQFAGPHQLQQPPPPPFQGQTTSQLSSGQASSSKEPEDQENQPTA</sequence>
<organism>
    <name type="scientific">Arabidopsis thaliana</name>
    <name type="common">Mouse-ear cress</name>
    <dbReference type="NCBI Taxonomy" id="3702"/>
    <lineage>
        <taxon>Eukaryota</taxon>
        <taxon>Viridiplantae</taxon>
        <taxon>Streptophyta</taxon>
        <taxon>Embryophyta</taxon>
        <taxon>Tracheophyta</taxon>
        <taxon>Spermatophyta</taxon>
        <taxon>Magnoliopsida</taxon>
        <taxon>eudicotyledons</taxon>
        <taxon>Gunneridae</taxon>
        <taxon>Pentapetalae</taxon>
        <taxon>rosids</taxon>
        <taxon>malvids</taxon>
        <taxon>Brassicales</taxon>
        <taxon>Brassicaceae</taxon>
        <taxon>Camelineae</taxon>
        <taxon>Arabidopsis</taxon>
    </lineage>
</organism>
<proteinExistence type="inferred from homology"/>
<protein>
    <recommendedName>
        <fullName>Putative transcription factor bHLH056</fullName>
    </recommendedName>
    <alternativeName>
        <fullName>Basic helix-loop-helix protein 56</fullName>
        <shortName>AtbHLH56</shortName>
        <shortName>bHLH 56</shortName>
    </alternativeName>
    <alternativeName>
        <fullName>Transcription factor EN 106</fullName>
    </alternativeName>
    <alternativeName>
        <fullName>bHLH transcription factor bHLH056</fullName>
    </alternativeName>
</protein>
<keyword id="KW-0238">DNA-binding</keyword>
<keyword id="KW-0539">Nucleus</keyword>
<keyword id="KW-1185">Reference proteome</keyword>
<keyword id="KW-0804">Transcription</keyword>
<keyword id="KW-0805">Transcription regulation</keyword>
<dbReference type="EMBL" id="AL035353">
    <property type="protein sequence ID" value="CAA22972.1"/>
    <property type="status" value="ALT_SEQ"/>
    <property type="molecule type" value="Genomic_DNA"/>
</dbReference>
<dbReference type="EMBL" id="AL161573">
    <property type="protein sequence ID" value="CAB81468.1"/>
    <property type="status" value="ALT_SEQ"/>
    <property type="molecule type" value="Genomic_DNA"/>
</dbReference>
<dbReference type="EMBL" id="CP002687">
    <property type="status" value="NOT_ANNOTATED_CDS"/>
    <property type="molecule type" value="Genomic_DNA"/>
</dbReference>
<dbReference type="PIR" id="T04519">
    <property type="entry name" value="T04519"/>
</dbReference>
<dbReference type="SMR" id="Q9SVU7"/>
<dbReference type="FunCoup" id="Q9SVU7">
    <property type="interactions" value="68"/>
</dbReference>
<dbReference type="PaxDb" id="3702-AT4G28800.1"/>
<dbReference type="Araport" id="AT4G28800"/>
<dbReference type="TAIR" id="AT4G28800"/>
<dbReference type="eggNOG" id="ENOG502QR6A">
    <property type="taxonomic scope" value="Eukaryota"/>
</dbReference>
<dbReference type="HOGENOM" id="CLU_030314_0_0_1"/>
<dbReference type="InParanoid" id="Q9SVU7"/>
<dbReference type="PRO" id="PR:Q9SVU7"/>
<dbReference type="Proteomes" id="UP000006548">
    <property type="component" value="Chromosome 4"/>
</dbReference>
<dbReference type="ExpressionAtlas" id="Q9SVU7">
    <property type="expression patterns" value="baseline and differential"/>
</dbReference>
<dbReference type="GO" id="GO:0005634">
    <property type="term" value="C:nucleus"/>
    <property type="evidence" value="ECO:0000318"/>
    <property type="project" value="GO_Central"/>
</dbReference>
<dbReference type="GO" id="GO:0003677">
    <property type="term" value="F:DNA binding"/>
    <property type="evidence" value="ECO:0007669"/>
    <property type="project" value="UniProtKB-KW"/>
</dbReference>
<dbReference type="GO" id="GO:0003700">
    <property type="term" value="F:DNA-binding transcription factor activity"/>
    <property type="evidence" value="ECO:0000250"/>
    <property type="project" value="TAIR"/>
</dbReference>
<dbReference type="GO" id="GO:0046983">
    <property type="term" value="F:protein dimerization activity"/>
    <property type="evidence" value="ECO:0007669"/>
    <property type="project" value="InterPro"/>
</dbReference>
<dbReference type="GO" id="GO:0006355">
    <property type="term" value="P:regulation of DNA-templated transcription"/>
    <property type="evidence" value="ECO:0000304"/>
    <property type="project" value="TAIR"/>
</dbReference>
<dbReference type="CDD" id="cd11445">
    <property type="entry name" value="bHLH_AtPIF_like"/>
    <property type="match status" value="1"/>
</dbReference>
<dbReference type="Gene3D" id="4.10.280.10">
    <property type="entry name" value="Helix-loop-helix DNA-binding domain"/>
    <property type="match status" value="1"/>
</dbReference>
<dbReference type="InterPro" id="IPR031066">
    <property type="entry name" value="bHLH_ALC-like_plant"/>
</dbReference>
<dbReference type="InterPro" id="IPR011598">
    <property type="entry name" value="bHLH_dom"/>
</dbReference>
<dbReference type="InterPro" id="IPR036638">
    <property type="entry name" value="HLH_DNA-bd_sf"/>
</dbReference>
<dbReference type="InterPro" id="IPR047265">
    <property type="entry name" value="PIF1-like_bHLH"/>
</dbReference>
<dbReference type="PANTHER" id="PTHR45855:SF21">
    <property type="entry name" value="TRANSCRIPTION FACTOR BHLH119-RELATED"/>
    <property type="match status" value="1"/>
</dbReference>
<dbReference type="PANTHER" id="PTHR45855">
    <property type="entry name" value="TRANSCRIPTION FACTOR PIF1-RELATED"/>
    <property type="match status" value="1"/>
</dbReference>
<dbReference type="Pfam" id="PF00010">
    <property type="entry name" value="HLH"/>
    <property type="match status" value="1"/>
</dbReference>
<dbReference type="SMART" id="SM00353">
    <property type="entry name" value="HLH"/>
    <property type="match status" value="1"/>
</dbReference>
<dbReference type="SUPFAM" id="SSF47459">
    <property type="entry name" value="HLH, helix-loop-helix DNA-binding domain"/>
    <property type="match status" value="1"/>
</dbReference>
<dbReference type="PROSITE" id="PS50888">
    <property type="entry name" value="BHLH"/>
    <property type="match status" value="1"/>
</dbReference>
<name>BH056_ARATH</name>
<feature type="chain" id="PRO_0000358753" description="Putative transcription factor bHLH056">
    <location>
        <begin position="1"/>
        <end position="445"/>
    </location>
</feature>
<feature type="domain" description="bHLH" evidence="1">
    <location>
        <begin position="255"/>
        <end position="304"/>
    </location>
</feature>
<feature type="region of interest" description="Disordered" evidence="2">
    <location>
        <begin position="36"/>
        <end position="70"/>
    </location>
</feature>
<feature type="region of interest" description="Disordered" evidence="2">
    <location>
        <begin position="224"/>
        <end position="260"/>
    </location>
</feature>
<feature type="region of interest" description="Disordered" evidence="2">
    <location>
        <begin position="365"/>
        <end position="445"/>
    </location>
</feature>
<feature type="compositionally biased region" description="Basic and acidic residues" evidence="2">
    <location>
        <begin position="231"/>
        <end position="246"/>
    </location>
</feature>
<feature type="compositionally biased region" description="Low complexity" evidence="2">
    <location>
        <begin position="418"/>
        <end position="433"/>
    </location>
</feature>
<reference key="1">
    <citation type="journal article" date="1999" name="Nature">
        <title>Sequence and analysis of chromosome 4 of the plant Arabidopsis thaliana.</title>
        <authorList>
            <person name="Mayer K.F.X."/>
            <person name="Schueller C."/>
            <person name="Wambutt R."/>
            <person name="Murphy G."/>
            <person name="Volckaert G."/>
            <person name="Pohl T."/>
            <person name="Duesterhoeft A."/>
            <person name="Stiekema W."/>
            <person name="Entian K.-D."/>
            <person name="Terryn N."/>
            <person name="Harris B."/>
            <person name="Ansorge W."/>
            <person name="Brandt P."/>
            <person name="Grivell L.A."/>
            <person name="Rieger M."/>
            <person name="Weichselgartner M."/>
            <person name="de Simone V."/>
            <person name="Obermaier B."/>
            <person name="Mache R."/>
            <person name="Mueller M."/>
            <person name="Kreis M."/>
            <person name="Delseny M."/>
            <person name="Puigdomenech P."/>
            <person name="Watson M."/>
            <person name="Schmidtheini T."/>
            <person name="Reichert B."/>
            <person name="Portetelle D."/>
            <person name="Perez-Alonso M."/>
            <person name="Boutry M."/>
            <person name="Bancroft I."/>
            <person name="Vos P."/>
            <person name="Hoheisel J."/>
            <person name="Zimmermann W."/>
            <person name="Wedler H."/>
            <person name="Ridley P."/>
            <person name="Langham S.-A."/>
            <person name="McCullagh B."/>
            <person name="Bilham L."/>
            <person name="Robben J."/>
            <person name="van der Schueren J."/>
            <person name="Grymonprez B."/>
            <person name="Chuang Y.-J."/>
            <person name="Vandenbussche F."/>
            <person name="Braeken M."/>
            <person name="Weltjens I."/>
            <person name="Voet M."/>
            <person name="Bastiaens I."/>
            <person name="Aert R."/>
            <person name="Defoor E."/>
            <person name="Weitzenegger T."/>
            <person name="Bothe G."/>
            <person name="Ramsperger U."/>
            <person name="Hilbert H."/>
            <person name="Braun M."/>
            <person name="Holzer E."/>
            <person name="Brandt A."/>
            <person name="Peters S."/>
            <person name="van Staveren M."/>
            <person name="Dirkse W."/>
            <person name="Mooijman P."/>
            <person name="Klein Lankhorst R."/>
            <person name="Rose M."/>
            <person name="Hauf J."/>
            <person name="Koetter P."/>
            <person name="Berneiser S."/>
            <person name="Hempel S."/>
            <person name="Feldpausch M."/>
            <person name="Lamberth S."/>
            <person name="Van den Daele H."/>
            <person name="De Keyser A."/>
            <person name="Buysshaert C."/>
            <person name="Gielen J."/>
            <person name="Villarroel R."/>
            <person name="De Clercq R."/>
            <person name="van Montagu M."/>
            <person name="Rogers J."/>
            <person name="Cronin A."/>
            <person name="Quail M.A."/>
            <person name="Bray-Allen S."/>
            <person name="Clark L."/>
            <person name="Doggett J."/>
            <person name="Hall S."/>
            <person name="Kay M."/>
            <person name="Lennard N."/>
            <person name="McLay K."/>
            <person name="Mayes R."/>
            <person name="Pettett A."/>
            <person name="Rajandream M.A."/>
            <person name="Lyne M."/>
            <person name="Benes V."/>
            <person name="Rechmann S."/>
            <person name="Borkova D."/>
            <person name="Bloecker H."/>
            <person name="Scharfe M."/>
            <person name="Grimm M."/>
            <person name="Loehnert T.-H."/>
            <person name="Dose S."/>
            <person name="de Haan M."/>
            <person name="Maarse A.C."/>
            <person name="Schaefer M."/>
            <person name="Mueller-Auer S."/>
            <person name="Gabel C."/>
            <person name="Fuchs M."/>
            <person name="Fartmann B."/>
            <person name="Granderath K."/>
            <person name="Dauner D."/>
            <person name="Herzl A."/>
            <person name="Neumann S."/>
            <person name="Argiriou A."/>
            <person name="Vitale D."/>
            <person name="Liguori R."/>
            <person name="Piravandi E."/>
            <person name="Massenet O."/>
            <person name="Quigley F."/>
            <person name="Clabauld G."/>
            <person name="Muendlein A."/>
            <person name="Felber R."/>
            <person name="Schnabl S."/>
            <person name="Hiller R."/>
            <person name="Schmidt W."/>
            <person name="Lecharny A."/>
            <person name="Aubourg S."/>
            <person name="Chefdor F."/>
            <person name="Cooke R."/>
            <person name="Berger C."/>
            <person name="Monfort A."/>
            <person name="Casacuberta E."/>
            <person name="Gibbons T."/>
            <person name="Weber N."/>
            <person name="Vandenbol M."/>
            <person name="Bargues M."/>
            <person name="Terol J."/>
            <person name="Torres A."/>
            <person name="Perez-Perez A."/>
            <person name="Purnelle B."/>
            <person name="Bent E."/>
            <person name="Johnson S."/>
            <person name="Tacon D."/>
            <person name="Jesse T."/>
            <person name="Heijnen L."/>
            <person name="Schwarz S."/>
            <person name="Scholler P."/>
            <person name="Heber S."/>
            <person name="Francs P."/>
            <person name="Bielke C."/>
            <person name="Frishman D."/>
            <person name="Haase D."/>
            <person name="Lemcke K."/>
            <person name="Mewes H.-W."/>
            <person name="Stocker S."/>
            <person name="Zaccaria P."/>
            <person name="Bevan M."/>
            <person name="Wilson R.K."/>
            <person name="de la Bastide M."/>
            <person name="Habermann K."/>
            <person name="Parnell L."/>
            <person name="Dedhia N."/>
            <person name="Gnoj L."/>
            <person name="Schutz K."/>
            <person name="Huang E."/>
            <person name="Spiegel L."/>
            <person name="Sekhon M."/>
            <person name="Murray J."/>
            <person name="Sheet P."/>
            <person name="Cordes M."/>
            <person name="Abu-Threideh J."/>
            <person name="Stoneking T."/>
            <person name="Kalicki J."/>
            <person name="Graves T."/>
            <person name="Harmon G."/>
            <person name="Edwards J."/>
            <person name="Latreille P."/>
            <person name="Courtney L."/>
            <person name="Cloud J."/>
            <person name="Abbott A."/>
            <person name="Scott K."/>
            <person name="Johnson D."/>
            <person name="Minx P."/>
            <person name="Bentley D."/>
            <person name="Fulton B."/>
            <person name="Miller N."/>
            <person name="Greco T."/>
            <person name="Kemp K."/>
            <person name="Kramer J."/>
            <person name="Fulton L."/>
            <person name="Mardis E."/>
            <person name="Dante M."/>
            <person name="Pepin K."/>
            <person name="Hillier L.W."/>
            <person name="Nelson J."/>
            <person name="Spieth J."/>
            <person name="Ryan E."/>
            <person name="Andrews S."/>
            <person name="Geisel C."/>
            <person name="Layman D."/>
            <person name="Du H."/>
            <person name="Ali J."/>
            <person name="Berghoff A."/>
            <person name="Jones K."/>
            <person name="Drone K."/>
            <person name="Cotton M."/>
            <person name="Joshu C."/>
            <person name="Antonoiu B."/>
            <person name="Zidanic M."/>
            <person name="Strong C."/>
            <person name="Sun H."/>
            <person name="Lamar B."/>
            <person name="Yordan C."/>
            <person name="Ma P."/>
            <person name="Zhong J."/>
            <person name="Preston R."/>
            <person name="Vil D."/>
            <person name="Shekher M."/>
            <person name="Matero A."/>
            <person name="Shah R."/>
            <person name="Swaby I.K."/>
            <person name="O'Shaughnessy A."/>
            <person name="Rodriguez M."/>
            <person name="Hoffman J."/>
            <person name="Till S."/>
            <person name="Granat S."/>
            <person name="Shohdy N."/>
            <person name="Hasegawa A."/>
            <person name="Hameed A."/>
            <person name="Lodhi M."/>
            <person name="Johnson A."/>
            <person name="Chen E."/>
            <person name="Marra M.A."/>
            <person name="Martienssen R."/>
            <person name="McCombie W.R."/>
        </authorList>
    </citation>
    <scope>NUCLEOTIDE SEQUENCE [LARGE SCALE GENOMIC DNA]</scope>
    <source>
        <strain>cv. Columbia</strain>
    </source>
</reference>
<reference key="2">
    <citation type="journal article" date="2017" name="Plant J.">
        <title>Araport11: a complete reannotation of the Arabidopsis thaliana reference genome.</title>
        <authorList>
            <person name="Cheng C.Y."/>
            <person name="Krishnakumar V."/>
            <person name="Chan A.P."/>
            <person name="Thibaud-Nissen F."/>
            <person name="Schobel S."/>
            <person name="Town C.D."/>
        </authorList>
    </citation>
    <scope>GENOME REANNOTATION</scope>
    <source>
        <strain>cv. Columbia</strain>
    </source>
</reference>
<reference key="3">
    <citation type="journal article" date="2003" name="Mol. Biol. Evol.">
        <title>The basic helix-loop-helix transcription factor family in plants: a genome-wide study of protein structure and functional diversity.</title>
        <authorList>
            <person name="Heim M.A."/>
            <person name="Jakoby M."/>
            <person name="Werber M."/>
            <person name="Martin C."/>
            <person name="Weisshaar B."/>
            <person name="Bailey P.C."/>
        </authorList>
    </citation>
    <scope>GENE FAMILY</scope>
    <scope>NOMENCLATURE</scope>
</reference>
<reference key="4">
    <citation type="journal article" date="2003" name="Plant Cell">
        <title>The Arabidopsis basic/helix-loop-helix transcription factor family.</title>
        <authorList>
            <person name="Toledo-Ortiz G."/>
            <person name="Huq E."/>
            <person name="Quail P.H."/>
        </authorList>
    </citation>
    <scope>GENE FAMILY</scope>
</reference>
<reference key="5">
    <citation type="journal article" date="2003" name="Plant Cell">
        <title>Update on the basic helix-loop-helix transcription factor gene family in Arabidopsis thaliana.</title>
        <authorList>
            <person name="Bailey P.C."/>
            <person name="Martin C."/>
            <person name="Toledo-Ortiz G."/>
            <person name="Quail P.H."/>
            <person name="Huq E."/>
            <person name="Heim M.A."/>
            <person name="Jakoby M."/>
            <person name="Werber M."/>
            <person name="Weisshaar B."/>
        </authorList>
    </citation>
    <scope>GENE FAMILY</scope>
    <scope>NOMENCLATURE</scope>
</reference>
<comment type="subunit">
    <text evidence="3">Homodimer.</text>
</comment>
<comment type="subcellular location">
    <subcellularLocation>
        <location evidence="1">Nucleus</location>
    </subcellularLocation>
</comment>
<comment type="sequence caution" evidence="3">
    <conflict type="erroneous gene model prediction">
        <sequence resource="EMBL-CDS" id="CAA22972"/>
    </conflict>
</comment>
<comment type="sequence caution" evidence="3">
    <conflict type="erroneous gene model prediction">
        <sequence resource="EMBL-CDS" id="CAB81468"/>
    </conflict>
</comment>
<evidence type="ECO:0000255" key="1">
    <source>
        <dbReference type="PROSITE-ProRule" id="PRU00981"/>
    </source>
</evidence>
<evidence type="ECO:0000256" key="2">
    <source>
        <dbReference type="SAM" id="MobiDB-lite"/>
    </source>
</evidence>
<evidence type="ECO:0000305" key="3"/>
<accession>Q9SVU7</accession>
<accession>F4JM32</accession>